<sequence>MQKLELLYEGKAKRIYRTESADMVWVEYKDSATAFNGEKKETITGKGRLNNEITTLLFRKLQEVGIKTHFVEKLSETEQLVKKVSIIPLEVVTRNVIAGSLSKRLGMEEGTVLAEPIVEFYFKDDDLGDPLVTEDHIRVLNVASPEQVSVLRDMALQINQVLIDHFASCRVRLVDFKLEFGVTDEGEIILADEISPDTCRLWDETSNEKFDKDVFRRDLGNLTDAYEEILKRLGGISHV</sequence>
<feature type="chain" id="PRO_1000122902" description="Phosphoribosylaminoimidazole-succinocarboxamide synthase">
    <location>
        <begin position="1"/>
        <end position="239"/>
    </location>
</feature>
<dbReference type="EC" id="6.3.2.6" evidence="1"/>
<dbReference type="EMBL" id="CP000227">
    <property type="protein sequence ID" value="ACM10815.1"/>
    <property type="molecule type" value="Genomic_DNA"/>
</dbReference>
<dbReference type="SMR" id="B9J1K2"/>
<dbReference type="KEGG" id="bcq:BCQ_0343"/>
<dbReference type="HOGENOM" id="CLU_061495_2_0_9"/>
<dbReference type="UniPathway" id="UPA00074">
    <property type="reaction ID" value="UER00131"/>
</dbReference>
<dbReference type="Proteomes" id="UP000000441">
    <property type="component" value="Chromosome"/>
</dbReference>
<dbReference type="GO" id="GO:0005524">
    <property type="term" value="F:ATP binding"/>
    <property type="evidence" value="ECO:0007669"/>
    <property type="project" value="UniProtKB-KW"/>
</dbReference>
<dbReference type="GO" id="GO:0004639">
    <property type="term" value="F:phosphoribosylaminoimidazolesuccinocarboxamide synthase activity"/>
    <property type="evidence" value="ECO:0007669"/>
    <property type="project" value="UniProtKB-UniRule"/>
</dbReference>
<dbReference type="GO" id="GO:0006189">
    <property type="term" value="P:'de novo' IMP biosynthetic process"/>
    <property type="evidence" value="ECO:0007669"/>
    <property type="project" value="UniProtKB-UniRule"/>
</dbReference>
<dbReference type="GO" id="GO:0009236">
    <property type="term" value="P:cobalamin biosynthetic process"/>
    <property type="evidence" value="ECO:0007669"/>
    <property type="project" value="InterPro"/>
</dbReference>
<dbReference type="CDD" id="cd01415">
    <property type="entry name" value="SAICAR_synt_PurC"/>
    <property type="match status" value="1"/>
</dbReference>
<dbReference type="FunFam" id="3.30.200.20:FF:000189">
    <property type="entry name" value="Phosphoribosylaminoimidazole-succinocarboxamide synthase"/>
    <property type="match status" value="1"/>
</dbReference>
<dbReference type="FunFam" id="3.30.470.20:FF:000006">
    <property type="entry name" value="Phosphoribosylaminoimidazole-succinocarboxamide synthase"/>
    <property type="match status" value="1"/>
</dbReference>
<dbReference type="Gene3D" id="3.30.470.20">
    <property type="entry name" value="ATP-grasp fold, B domain"/>
    <property type="match status" value="1"/>
</dbReference>
<dbReference type="Gene3D" id="3.30.200.20">
    <property type="entry name" value="Phosphorylase Kinase, domain 1"/>
    <property type="match status" value="1"/>
</dbReference>
<dbReference type="HAMAP" id="MF_00137">
    <property type="entry name" value="SAICAR_synth"/>
    <property type="match status" value="1"/>
</dbReference>
<dbReference type="InterPro" id="IPR028923">
    <property type="entry name" value="SAICAR_synt/ADE2_N"/>
</dbReference>
<dbReference type="InterPro" id="IPR033934">
    <property type="entry name" value="SAICAR_synt_PurC"/>
</dbReference>
<dbReference type="InterPro" id="IPR001636">
    <property type="entry name" value="SAICAR_synth"/>
</dbReference>
<dbReference type="InterPro" id="IPR050089">
    <property type="entry name" value="SAICAR_synthetase"/>
</dbReference>
<dbReference type="InterPro" id="IPR018236">
    <property type="entry name" value="SAICAR_synthetase_CS"/>
</dbReference>
<dbReference type="NCBIfam" id="TIGR00081">
    <property type="entry name" value="purC"/>
    <property type="match status" value="1"/>
</dbReference>
<dbReference type="PANTHER" id="PTHR43599">
    <property type="entry name" value="MULTIFUNCTIONAL PROTEIN ADE2"/>
    <property type="match status" value="1"/>
</dbReference>
<dbReference type="PANTHER" id="PTHR43599:SF3">
    <property type="entry name" value="SI:DKEY-6E2.2"/>
    <property type="match status" value="1"/>
</dbReference>
<dbReference type="Pfam" id="PF01259">
    <property type="entry name" value="SAICAR_synt"/>
    <property type="match status" value="1"/>
</dbReference>
<dbReference type="SUPFAM" id="SSF56104">
    <property type="entry name" value="SAICAR synthase-like"/>
    <property type="match status" value="1"/>
</dbReference>
<dbReference type="PROSITE" id="PS01057">
    <property type="entry name" value="SAICAR_SYNTHETASE_1"/>
    <property type="match status" value="1"/>
</dbReference>
<dbReference type="PROSITE" id="PS01058">
    <property type="entry name" value="SAICAR_SYNTHETASE_2"/>
    <property type="match status" value="1"/>
</dbReference>
<accession>B9J1K2</accession>
<organism>
    <name type="scientific">Bacillus cereus (strain Q1)</name>
    <dbReference type="NCBI Taxonomy" id="361100"/>
    <lineage>
        <taxon>Bacteria</taxon>
        <taxon>Bacillati</taxon>
        <taxon>Bacillota</taxon>
        <taxon>Bacilli</taxon>
        <taxon>Bacillales</taxon>
        <taxon>Bacillaceae</taxon>
        <taxon>Bacillus</taxon>
        <taxon>Bacillus cereus group</taxon>
    </lineage>
</organism>
<gene>
    <name evidence="1" type="primary">purC</name>
    <name type="ordered locus">BCQ_0343</name>
</gene>
<comment type="catalytic activity">
    <reaction evidence="1">
        <text>5-amino-1-(5-phospho-D-ribosyl)imidazole-4-carboxylate + L-aspartate + ATP = (2S)-2-[5-amino-1-(5-phospho-beta-D-ribosyl)imidazole-4-carboxamido]succinate + ADP + phosphate + 2 H(+)</text>
        <dbReference type="Rhea" id="RHEA:22628"/>
        <dbReference type="ChEBI" id="CHEBI:15378"/>
        <dbReference type="ChEBI" id="CHEBI:29991"/>
        <dbReference type="ChEBI" id="CHEBI:30616"/>
        <dbReference type="ChEBI" id="CHEBI:43474"/>
        <dbReference type="ChEBI" id="CHEBI:58443"/>
        <dbReference type="ChEBI" id="CHEBI:77657"/>
        <dbReference type="ChEBI" id="CHEBI:456216"/>
        <dbReference type="EC" id="6.3.2.6"/>
    </reaction>
</comment>
<comment type="pathway">
    <text evidence="1">Purine metabolism; IMP biosynthesis via de novo pathway; 5-amino-1-(5-phospho-D-ribosyl)imidazole-4-carboxamide from 5-amino-1-(5-phospho-D-ribosyl)imidazole-4-carboxylate: step 1/2.</text>
</comment>
<comment type="similarity">
    <text evidence="1">Belongs to the SAICAR synthetase family.</text>
</comment>
<protein>
    <recommendedName>
        <fullName evidence="1">Phosphoribosylaminoimidazole-succinocarboxamide synthase</fullName>
        <ecNumber evidence="1">6.3.2.6</ecNumber>
    </recommendedName>
    <alternativeName>
        <fullName evidence="1">SAICAR synthetase</fullName>
    </alternativeName>
</protein>
<proteinExistence type="inferred from homology"/>
<keyword id="KW-0067">ATP-binding</keyword>
<keyword id="KW-0436">Ligase</keyword>
<keyword id="KW-0547">Nucleotide-binding</keyword>
<keyword id="KW-0658">Purine biosynthesis</keyword>
<evidence type="ECO:0000255" key="1">
    <source>
        <dbReference type="HAMAP-Rule" id="MF_00137"/>
    </source>
</evidence>
<reference key="1">
    <citation type="journal article" date="2009" name="J. Bacteriol.">
        <title>Complete genome sequence of the extremophilic Bacillus cereus strain Q1 with industrial applications.</title>
        <authorList>
            <person name="Xiong Z."/>
            <person name="Jiang Y."/>
            <person name="Qi D."/>
            <person name="Lu H."/>
            <person name="Yang F."/>
            <person name="Yang J."/>
            <person name="Chen L."/>
            <person name="Sun L."/>
            <person name="Xu X."/>
            <person name="Xue Y."/>
            <person name="Zhu Y."/>
            <person name="Jin Q."/>
        </authorList>
    </citation>
    <scope>NUCLEOTIDE SEQUENCE [LARGE SCALE GENOMIC DNA]</scope>
    <source>
        <strain>Q1</strain>
    </source>
</reference>
<name>PUR7_BACCQ</name>